<evidence type="ECO:0000250" key="1"/>
<evidence type="ECO:0000305" key="2"/>
<dbReference type="EC" id="4.2.3.-"/>
<dbReference type="EMBL" id="BC088454">
    <property type="protein sequence ID" value="AAH88454.1"/>
    <property type="molecule type" value="mRNA"/>
</dbReference>
<dbReference type="RefSeq" id="NP_001009658.1">
    <property type="nucleotide sequence ID" value="NM_001009658.1"/>
</dbReference>
<dbReference type="RefSeq" id="XP_017448023.1">
    <property type="nucleotide sequence ID" value="XM_017592534.1"/>
</dbReference>
<dbReference type="SMR" id="Q5M7T9"/>
<dbReference type="FunCoup" id="Q5M7T9">
    <property type="interactions" value="63"/>
</dbReference>
<dbReference type="STRING" id="10116.ENSRNOP00000008698"/>
<dbReference type="iPTMnet" id="Q5M7T9"/>
<dbReference type="PhosphoSitePlus" id="Q5M7T9"/>
<dbReference type="jPOST" id="Q5M7T9"/>
<dbReference type="PaxDb" id="10116-ENSRNOP00000008698"/>
<dbReference type="GeneID" id="297332"/>
<dbReference type="KEGG" id="rno:297332"/>
<dbReference type="UCSC" id="RGD:1309144">
    <property type="organism name" value="rat"/>
</dbReference>
<dbReference type="AGR" id="RGD:1309144"/>
<dbReference type="CTD" id="55258"/>
<dbReference type="RGD" id="1309144">
    <property type="gene designation" value="Thnsl2"/>
</dbReference>
<dbReference type="VEuPathDB" id="HostDB:ENSRNOG00000006508"/>
<dbReference type="eggNOG" id="KOG2616">
    <property type="taxonomic scope" value="Eukaryota"/>
</dbReference>
<dbReference type="HOGENOM" id="CLU_015170_1_1_1"/>
<dbReference type="InParanoid" id="Q5M7T9"/>
<dbReference type="OrthoDB" id="6475at9989"/>
<dbReference type="PhylomeDB" id="Q5M7T9"/>
<dbReference type="TreeFam" id="TF329641"/>
<dbReference type="PRO" id="PR:Q5M7T9"/>
<dbReference type="Proteomes" id="UP000002494">
    <property type="component" value="Chromosome 4"/>
</dbReference>
<dbReference type="Bgee" id="ENSRNOG00000006508">
    <property type="expression patterns" value="Expressed in adult mammalian kidney and 19 other cell types or tissues"/>
</dbReference>
<dbReference type="GO" id="GO:0016829">
    <property type="term" value="F:lyase activity"/>
    <property type="evidence" value="ECO:0007669"/>
    <property type="project" value="UniProtKB-KW"/>
</dbReference>
<dbReference type="GO" id="GO:0030170">
    <property type="term" value="F:pyridoxal phosphate binding"/>
    <property type="evidence" value="ECO:0000266"/>
    <property type="project" value="RGD"/>
</dbReference>
<dbReference type="GO" id="GO:0070905">
    <property type="term" value="F:serine binding"/>
    <property type="evidence" value="ECO:0000266"/>
    <property type="project" value="RGD"/>
</dbReference>
<dbReference type="GO" id="GO:0046360">
    <property type="term" value="P:2-oxobutyrate biosynthetic process"/>
    <property type="evidence" value="ECO:0000266"/>
    <property type="project" value="RGD"/>
</dbReference>
<dbReference type="GO" id="GO:0009071">
    <property type="term" value="P:serine family amino acid catabolic process"/>
    <property type="evidence" value="ECO:0000266"/>
    <property type="project" value="RGD"/>
</dbReference>
<dbReference type="CDD" id="cd01560">
    <property type="entry name" value="Thr-synth_2"/>
    <property type="match status" value="1"/>
</dbReference>
<dbReference type="FunFam" id="3.90.1380.10:FF:000003">
    <property type="entry name" value="THR4p Threonine synthase"/>
    <property type="match status" value="1"/>
</dbReference>
<dbReference type="FunFam" id="3.40.50.1100:FF:000047">
    <property type="entry name" value="Threonine synthase like 2"/>
    <property type="match status" value="1"/>
</dbReference>
<dbReference type="Gene3D" id="3.40.50.1100">
    <property type="match status" value="2"/>
</dbReference>
<dbReference type="Gene3D" id="3.90.1380.10">
    <property type="entry name" value="Threonine synthase, N-terminal domain"/>
    <property type="match status" value="1"/>
</dbReference>
<dbReference type="InterPro" id="IPR029144">
    <property type="entry name" value="Thr_synth_N"/>
</dbReference>
<dbReference type="InterPro" id="IPR037158">
    <property type="entry name" value="Thr_synth_N_sf"/>
</dbReference>
<dbReference type="InterPro" id="IPR004450">
    <property type="entry name" value="Thr_synthase-like"/>
</dbReference>
<dbReference type="InterPro" id="IPR051166">
    <property type="entry name" value="Threonine_Synthase"/>
</dbReference>
<dbReference type="InterPro" id="IPR001926">
    <property type="entry name" value="TrpB-like_PALP"/>
</dbReference>
<dbReference type="InterPro" id="IPR036052">
    <property type="entry name" value="TrpB-like_PALP_sf"/>
</dbReference>
<dbReference type="NCBIfam" id="TIGR00260">
    <property type="entry name" value="thrC"/>
    <property type="match status" value="1"/>
</dbReference>
<dbReference type="PANTHER" id="PTHR42690">
    <property type="entry name" value="THREONINE SYNTHASE FAMILY MEMBER"/>
    <property type="match status" value="1"/>
</dbReference>
<dbReference type="PANTHER" id="PTHR42690:SF1">
    <property type="entry name" value="THREONINE SYNTHASE-LIKE 2"/>
    <property type="match status" value="1"/>
</dbReference>
<dbReference type="Pfam" id="PF00291">
    <property type="entry name" value="PALP"/>
    <property type="match status" value="1"/>
</dbReference>
<dbReference type="Pfam" id="PF14821">
    <property type="entry name" value="Thr_synth_N"/>
    <property type="match status" value="1"/>
</dbReference>
<dbReference type="SUPFAM" id="SSF53686">
    <property type="entry name" value="Tryptophan synthase beta subunit-like PLP-dependent enzymes"/>
    <property type="match status" value="1"/>
</dbReference>
<name>THNS2_RAT</name>
<organism>
    <name type="scientific">Rattus norvegicus</name>
    <name type="common">Rat</name>
    <dbReference type="NCBI Taxonomy" id="10116"/>
    <lineage>
        <taxon>Eukaryota</taxon>
        <taxon>Metazoa</taxon>
        <taxon>Chordata</taxon>
        <taxon>Craniata</taxon>
        <taxon>Vertebrata</taxon>
        <taxon>Euteleostomi</taxon>
        <taxon>Mammalia</taxon>
        <taxon>Eutheria</taxon>
        <taxon>Euarchontoglires</taxon>
        <taxon>Glires</taxon>
        <taxon>Rodentia</taxon>
        <taxon>Myomorpha</taxon>
        <taxon>Muroidea</taxon>
        <taxon>Muridae</taxon>
        <taxon>Murinae</taxon>
        <taxon>Rattus</taxon>
    </lineage>
</organism>
<accession>Q5M7T9</accession>
<proteinExistence type="evidence at transcript level"/>
<protein>
    <recommendedName>
        <fullName>Threonine synthase-like 2</fullName>
        <shortName>TSH2</shortName>
        <ecNumber>4.2.3.-</ecNumber>
    </recommendedName>
</protein>
<sequence length="485" mass="54137">MWYTSTRGMAPRVNFEGALFSGYAPDGGLYMPEELPRLDKETLRHWSTLSYRSLVKELCALFVGLELIPRHDLNGLIDQAFSRFRHRDVVHLCKLKNGLNILELWHGVTYAFKDLSLSCTAQFLQYFLEKKKKHVTIVVGTSGDTGSAAIESVQGSKNVDIIVLLPKGHCSKIQELQMTTVVKENVHVFGVEGNSDELDEPIKAVFADVAFVQRHNLMSLNSINWSRVLVQMAHHFFAYFQCTPSLDMHLLPTVEVVVPTGAGGNLAAGCIAQKMGLPISLVVAVNRNDIIHRTVQKGDFSLCEVVRKTLASAMDIQVPYNMERIFWLLAGSDSQTTRALMEQFERTQSLHLPKDLHSKLSEAVTSESVSDEAITQTMGRCWEENQYLLCPHSATAVSYHYQQTDSGQPSSIPRCCLAPASAVKFPEAVQAAGLTPETPAEILALEHKETRCTPMRRGDDWTQMLRDTIEALSLRWKGCVENTAE</sequence>
<reference key="1">
    <citation type="journal article" date="2004" name="Genome Res.">
        <title>The status, quality, and expansion of the NIH full-length cDNA project: the Mammalian Gene Collection (MGC).</title>
        <authorList>
            <consortium name="The MGC Project Team"/>
        </authorList>
    </citation>
    <scope>NUCLEOTIDE SEQUENCE [LARGE SCALE MRNA]</scope>
    <source>
        <tissue>Kidney</tissue>
    </source>
</reference>
<comment type="function">
    <text evidence="1">Acts as a catabolic phospho-lyase on both gamma- and beta-phosphorylated substrates. Degrades O-phospho-threonine (PThr) to alpha-ketobutyrate, ammonia and phosphate (By similarity).</text>
</comment>
<comment type="cofactor">
    <cofactor evidence="1">
        <name>pyridoxal 5'-phosphate</name>
        <dbReference type="ChEBI" id="CHEBI:597326"/>
    </cofactor>
</comment>
<comment type="similarity">
    <text evidence="2">Belongs to the threonine synthase family.</text>
</comment>
<keyword id="KW-0456">Lyase</keyword>
<keyword id="KW-0663">Pyridoxal phosphate</keyword>
<keyword id="KW-1185">Reference proteome</keyword>
<feature type="chain" id="PRO_0000306410" description="Threonine synthase-like 2">
    <location>
        <begin position="1"/>
        <end position="485"/>
    </location>
</feature>
<feature type="modified residue" description="N6-(pyridoxal phosphate)lysine" evidence="1">
    <location>
        <position position="113"/>
    </location>
</feature>
<gene>
    <name type="primary">Thnsl2</name>
</gene>